<dbReference type="EMBL" id="BX284602">
    <property type="protein sequence ID" value="CCD61745.1"/>
    <property type="molecule type" value="Genomic_DNA"/>
</dbReference>
<dbReference type="EMBL" id="BX284602">
    <property type="protein sequence ID" value="CCD61746.1"/>
    <property type="molecule type" value="Genomic_DNA"/>
</dbReference>
<dbReference type="EMBL" id="BX284602">
    <property type="protein sequence ID" value="CCD61747.1"/>
    <property type="molecule type" value="Genomic_DNA"/>
</dbReference>
<dbReference type="RefSeq" id="NP_001022314.1">
    <molecule id="H2KY84-3"/>
    <property type="nucleotide sequence ID" value="NM_001027143.6"/>
</dbReference>
<dbReference type="RefSeq" id="NP_494795.2">
    <molecule id="H2KY84-1"/>
    <property type="nucleotide sequence ID" value="NM_062394.4"/>
</dbReference>
<dbReference type="RefSeq" id="NP_494796.2">
    <molecule id="H2KY84-2"/>
    <property type="nucleotide sequence ID" value="NM_062395.2"/>
</dbReference>
<dbReference type="SMR" id="H2KY84"/>
<dbReference type="FunCoup" id="H2KY84">
    <property type="interactions" value="1445"/>
</dbReference>
<dbReference type="STRING" id="6239.T05C1.4a.1"/>
<dbReference type="PaxDb" id="6239-T05C1.4a"/>
<dbReference type="PeptideAtlas" id="H2KY84"/>
<dbReference type="EnsemblMetazoa" id="T05C1.4a.1">
    <molecule id="H2KY84-1"/>
    <property type="protein sequence ID" value="T05C1.4a.1"/>
    <property type="gene ID" value="WBGene00020251"/>
</dbReference>
<dbReference type="EnsemblMetazoa" id="T05C1.4b.1">
    <molecule id="H2KY84-2"/>
    <property type="protein sequence ID" value="T05C1.4b.1"/>
    <property type="gene ID" value="WBGene00020251"/>
</dbReference>
<dbReference type="EnsemblMetazoa" id="T05C1.4c.1">
    <molecule id="H2KY84-3"/>
    <property type="protein sequence ID" value="T05C1.4c.1"/>
    <property type="gene ID" value="WBGene00020251"/>
</dbReference>
<dbReference type="GeneID" id="173786"/>
<dbReference type="KEGG" id="cel:CELE_T05C1.4"/>
<dbReference type="UCSC" id="T05C1.4c">
    <property type="organism name" value="c. elegans"/>
</dbReference>
<dbReference type="AGR" id="WB:WBGene00020251"/>
<dbReference type="CTD" id="173786"/>
<dbReference type="WormBase" id="T05C1.4a">
    <molecule id="H2KY84-1"/>
    <property type="protein sequence ID" value="CE33443"/>
    <property type="gene ID" value="WBGene00020251"/>
    <property type="gene designation" value="camt-1"/>
</dbReference>
<dbReference type="WormBase" id="T05C1.4b">
    <molecule id="H2KY84-2"/>
    <property type="protein sequence ID" value="CE33444"/>
    <property type="gene ID" value="WBGene00020251"/>
    <property type="gene designation" value="camt-1"/>
</dbReference>
<dbReference type="WormBase" id="T05C1.4c">
    <molecule id="H2KY84-3"/>
    <property type="protein sequence ID" value="CE32207"/>
    <property type="gene ID" value="WBGene00020251"/>
    <property type="gene designation" value="camt-1"/>
</dbReference>
<dbReference type="eggNOG" id="KOG0520">
    <property type="taxonomic scope" value="Eukaryota"/>
</dbReference>
<dbReference type="GeneTree" id="ENSGT00940000165359"/>
<dbReference type="HOGENOM" id="CLU_1157312_0_0_1"/>
<dbReference type="InParanoid" id="H2KY84"/>
<dbReference type="OMA" id="DANHIGT"/>
<dbReference type="OrthoDB" id="10254686at2759"/>
<dbReference type="PhylomeDB" id="H2KY84"/>
<dbReference type="PRO" id="PR:H2KY84"/>
<dbReference type="Proteomes" id="UP000001940">
    <property type="component" value="Chromosome II"/>
</dbReference>
<dbReference type="Bgee" id="WBGene00020251">
    <property type="expression patterns" value="Expressed in larva and 3 other cell types or tissues"/>
</dbReference>
<dbReference type="ExpressionAtlas" id="H2KY84">
    <property type="expression patterns" value="baseline and differential"/>
</dbReference>
<dbReference type="GO" id="GO:0000785">
    <property type="term" value="C:chromatin"/>
    <property type="evidence" value="ECO:0000314"/>
    <property type="project" value="UniProtKB"/>
</dbReference>
<dbReference type="GO" id="GO:0005634">
    <property type="term" value="C:nucleus"/>
    <property type="evidence" value="ECO:0000314"/>
    <property type="project" value="UniProtKB"/>
</dbReference>
<dbReference type="GO" id="GO:0003682">
    <property type="term" value="F:chromatin binding"/>
    <property type="evidence" value="ECO:0000314"/>
    <property type="project" value="UniProtKB"/>
</dbReference>
<dbReference type="GO" id="GO:0003690">
    <property type="term" value="F:double-stranded DNA binding"/>
    <property type="evidence" value="ECO:0000318"/>
    <property type="project" value="GO_Central"/>
</dbReference>
<dbReference type="GO" id="GO:0003712">
    <property type="term" value="F:transcription coregulator activity"/>
    <property type="evidence" value="ECO:0000318"/>
    <property type="project" value="GO_Central"/>
</dbReference>
<dbReference type="GO" id="GO:0050918">
    <property type="term" value="P:positive chemotaxis"/>
    <property type="evidence" value="ECO:0000316"/>
    <property type="project" value="UniProtKB"/>
</dbReference>
<dbReference type="GO" id="GO:0045944">
    <property type="term" value="P:positive regulation of transcription by RNA polymerase II"/>
    <property type="evidence" value="ECO:0000315"/>
    <property type="project" value="UniProtKB"/>
</dbReference>
<dbReference type="GO" id="GO:0006357">
    <property type="term" value="P:regulation of transcription by RNA polymerase II"/>
    <property type="evidence" value="ECO:0000318"/>
    <property type="project" value="GO_Central"/>
</dbReference>
<dbReference type="GO" id="GO:0070482">
    <property type="term" value="P:response to oxygen levels"/>
    <property type="evidence" value="ECO:0000316"/>
    <property type="project" value="UniProtKB"/>
</dbReference>
<dbReference type="CDD" id="cd00102">
    <property type="entry name" value="IPT"/>
    <property type="match status" value="1"/>
</dbReference>
<dbReference type="FunFam" id="1.25.40.20:FF:000685">
    <property type="entry name" value="CAMTA (CAlModulin-binding Transcriptional activator)"/>
    <property type="match status" value="1"/>
</dbReference>
<dbReference type="Gene3D" id="1.20.5.190">
    <property type="match status" value="1"/>
</dbReference>
<dbReference type="Gene3D" id="1.25.40.20">
    <property type="entry name" value="Ankyrin repeat-containing domain"/>
    <property type="match status" value="1"/>
</dbReference>
<dbReference type="Gene3D" id="2.60.40.10">
    <property type="entry name" value="Immunoglobulins"/>
    <property type="match status" value="1"/>
</dbReference>
<dbReference type="InterPro" id="IPR036770">
    <property type="entry name" value="Ankyrin_rpt-contain_sf"/>
</dbReference>
<dbReference type="InterPro" id="IPR005559">
    <property type="entry name" value="CG-1_dom"/>
</dbReference>
<dbReference type="InterPro" id="IPR013783">
    <property type="entry name" value="Ig-like_fold"/>
</dbReference>
<dbReference type="InterPro" id="IPR014756">
    <property type="entry name" value="Ig_E-set"/>
</dbReference>
<dbReference type="InterPro" id="IPR000048">
    <property type="entry name" value="IQ_motif_EF-hand-BS"/>
</dbReference>
<dbReference type="InterPro" id="IPR027417">
    <property type="entry name" value="P-loop_NTPase"/>
</dbReference>
<dbReference type="PANTHER" id="PTHR23335">
    <property type="entry name" value="CALMODULIN-BINDING TRANSCRIPTION ACTIVATOR CAMTA"/>
    <property type="match status" value="1"/>
</dbReference>
<dbReference type="PANTHER" id="PTHR23335:SF1">
    <property type="entry name" value="CALMODULIN-BINDING TRANSCRIPTION ACTIVATOR, ISOFORM F"/>
    <property type="match status" value="1"/>
</dbReference>
<dbReference type="Pfam" id="PF03859">
    <property type="entry name" value="CG-1"/>
    <property type="match status" value="1"/>
</dbReference>
<dbReference type="SMART" id="SM01076">
    <property type="entry name" value="CG-1"/>
    <property type="match status" value="1"/>
</dbReference>
<dbReference type="SMART" id="SM00015">
    <property type="entry name" value="IQ"/>
    <property type="match status" value="4"/>
</dbReference>
<dbReference type="SUPFAM" id="SSF48403">
    <property type="entry name" value="Ankyrin repeat"/>
    <property type="match status" value="1"/>
</dbReference>
<dbReference type="SUPFAM" id="SSF81296">
    <property type="entry name" value="E set domains"/>
    <property type="match status" value="1"/>
</dbReference>
<dbReference type="SUPFAM" id="SSF52540">
    <property type="entry name" value="P-loop containing nucleoside triphosphate hydrolases"/>
    <property type="match status" value="1"/>
</dbReference>
<dbReference type="PROSITE" id="PS50297">
    <property type="entry name" value="ANK_REP_REGION"/>
    <property type="match status" value="1"/>
</dbReference>
<dbReference type="PROSITE" id="PS51437">
    <property type="entry name" value="CG_1"/>
    <property type="match status" value="1"/>
</dbReference>
<dbReference type="PROSITE" id="PS50096">
    <property type="entry name" value="IQ"/>
    <property type="match status" value="1"/>
</dbReference>
<reference evidence="9" key="1">
    <citation type="journal article" date="1998" name="Science">
        <title>Genome sequence of the nematode C. elegans: a platform for investigating biology.</title>
        <authorList>
            <consortium name="The C. elegans sequencing consortium"/>
        </authorList>
    </citation>
    <scope>NUCLEOTIDE SEQUENCE [LARGE SCALE GENOMIC DNA]</scope>
    <source>
        <strain evidence="9">Bristol N2</strain>
    </source>
</reference>
<reference evidence="7" key="2">
    <citation type="journal article" date="2021" name="Elife">
        <title>Neuronal calmodulin levels are controlled by CAMTA transcription factors.</title>
        <authorList>
            <person name="Vuong-Brender T.T."/>
            <person name="Flynn S."/>
            <person name="Vallis Y."/>
            <person name="de Bono M."/>
        </authorList>
    </citation>
    <scope>FUNCTION</scope>
    <scope>SUBCELLULAR LOCATION</scope>
    <scope>TISSUE SPECIFICITY</scope>
    <scope>DOMAIN</scope>
    <scope>MUTAGENESIS OF 142-GLY-LYS-143; 175-ARG-ARG-176; 189-VAL--LEU-192 AND 631-ARG--ALA-1185</scope>
</reference>
<feature type="chain" id="PRO_0000454731" description="Calmodulin-binding transcription activator homolog 1">
    <location>
        <begin position="1"/>
        <end position="1185"/>
    </location>
</feature>
<feature type="domain" description="IPT/TIG" evidence="1">
    <location>
        <begin position="418"/>
        <end position="498"/>
    </location>
</feature>
<feature type="repeat" description="ANK" evidence="2">
    <location>
        <begin position="616"/>
        <end position="646"/>
    </location>
</feature>
<feature type="domain" description="IQ" evidence="3">
    <location>
        <begin position="957"/>
        <end position="984"/>
    </location>
</feature>
<feature type="DNA-binding region" description="CG-1" evidence="4">
    <location>
        <begin position="72"/>
        <end position="200"/>
    </location>
</feature>
<feature type="region of interest" description="Disordered" evidence="5">
    <location>
        <begin position="252"/>
        <end position="277"/>
    </location>
</feature>
<feature type="region of interest" description="Disordered" evidence="5">
    <location>
        <begin position="390"/>
        <end position="411"/>
    </location>
</feature>
<feature type="region of interest" description="Disordered" evidence="5">
    <location>
        <begin position="1121"/>
        <end position="1185"/>
    </location>
</feature>
<feature type="compositionally biased region" description="Low complexity" evidence="5">
    <location>
        <begin position="393"/>
        <end position="411"/>
    </location>
</feature>
<feature type="compositionally biased region" description="Basic and acidic residues" evidence="5">
    <location>
        <begin position="1128"/>
        <end position="1147"/>
    </location>
</feature>
<feature type="splice variant" id="VSP_061378" description="In isoform c." evidence="7">
    <original>MNNSVTRLLFKRLLTLQLCHHFDIIPHRDQSFDCVQMQQPQNETANNFIPSIQLLWSTDPPQIRPDGTYPQAVELFPCFKDKWNTKEEILNIILAANADPKSNCVTVQSSPRPCSSSQFIYPRLDNAWYKNDGYIWKKRTNGKQNREDHLNLKISGHPHISAKYIHSAIVPTFHRRSYSVPDSDCHVLVHYLNVKTNNKIDDQAEEIARSMIENKVFISLSQLHDQLSPIFLQTLNVNQLVAEINEHLKKKGVNLPTSPLPQEPSSSTSRELERRNSCSSAFRKGLSSVALRRQPSANSEIDANHIGTMLKRFGCNGSSSDRISIIQPTMQNFQSIRSHQNHVAMESRSPSGDGDSRPITFEEDASYQQLSIKSSTNVSTPASAFAEKMKIRSGSQESPMGPPSSSSVTSTSLIPIIEMTPSSSSLKGGQKMLVVGGYYRKGHEYKISFGRGRMMPAVLIHAGVLSCVIPPSAKPEVVQIRVFCNGQAISTASEFTYEPQSAHLIKENDDTLVQIFEKIRIMACAFNAYSSIENIQSSSCMESLLANIVQQIDNEVSSQNLNYKTELLNGSAHFPSKTVLHLVASLDYDRLFEALIDLSRKVPACREFDIFARDNDGSTPLHTACKNSASRIARLIISIDSSAIDVVDDRGRTPVEVAPEHSIDMLSDKNNEEERVNATELWVMTNGKAFTTDKILDGKISRAPIAEKPDDLLREATSSYSIMSEMYEGPMLQAGTSRECDEDCESCCDPDSTQQLHVEIAMDTDVHVPDSPKMARLFHAVTSPGIVVPPNARARMADLARQIIEALPDRIKRNSEVSMCPDEEDPGQNHHGGVEPMFYQQASCSMSTDSPNMMDDYFDMMATETRNDIFTEPRSTETTETSASKSAQLFATHCNFFDDRSFASSSTRANTFESDTLDFDKDLGEFFTIHVDRFVDPIQQRLANLKYN</original>
    <variation>MVYSQLNPKRSALDADDHLLYRGFC</variation>
    <location>
        <begin position="1"/>
        <end position="948"/>
    </location>
</feature>
<feature type="splice variant" id="VSP_061379" description="In isoform b and isoform c." evidence="7">
    <original>NVNIDDGHTQHLIAENACAKRRRYVACPQTSGDQRNKRDSDGERKRDAHHDAPEFIPIGATPSSTTIPH</original>
    <variation>KLRKMHALNEDGTSPARKPAEINATNEILMVNGKEMLTTMPQNSFRSVQHHPQQQFHIDQHNVIIHGTN</variation>
    <location>
        <begin position="1095"/>
        <end position="1163"/>
    </location>
</feature>
<feature type="splice variant" id="VSP_061380" description="In isoform b and isoform c." evidence="7">
    <location>
        <begin position="1164"/>
        <end position="1185"/>
    </location>
</feature>
<feature type="mutagenesis site" description="In db1258; defects in aggregation behavior (feeding in groups) and O2-response, in a npr-1 mutant background." evidence="6">
    <original>GK</original>
    <variation>AA</variation>
    <location>
        <begin position="142"/>
        <end position="143"/>
    </location>
</feature>
<feature type="mutagenesis site" description="In db1259; defects in aggregation behavior (feeding in groups) and O2-response, in a npr-1 mutant background." evidence="6">
    <original>RR</original>
    <variation>AA</variation>
    <location>
        <begin position="175"/>
        <end position="176"/>
    </location>
</feature>
<feature type="mutagenesis site" description="In db1260; defects in aggregation behavior (feeding in groups) and O2-response, in a npr-1 mutant background." evidence="6">
    <original>VHYL</original>
    <variation>APAA</variation>
    <location>
        <begin position="189"/>
        <end position="192"/>
    </location>
</feature>
<feature type="mutagenesis site" description="In db973; increased turning frequency both in the presence and absence of a CO2 stimulus. BAG CO2 sensor neurons have higher Ca2+ baselines and Ca2+ responses. In an npr-1 mutant background, has pleiotropic behavioral defects and reduced expression of calmodulin/cmd-1 in several types of neurons." evidence="6">
    <location>
        <begin position="631"/>
        <end position="1185"/>
    </location>
</feature>
<name>CMTA1_CAEEL</name>
<keyword id="KW-0010">Activator</keyword>
<keyword id="KW-0025">Alternative splicing</keyword>
<keyword id="KW-0040">ANK repeat</keyword>
<keyword id="KW-0539">Nucleus</keyword>
<keyword id="KW-1185">Reference proteome</keyword>
<keyword id="KW-0804">Transcription</keyword>
<keyword id="KW-0805">Transcription regulation</keyword>
<comment type="function">
    <text evidence="6">Transcription factor (PubMed:34499028). Positively modulates neuronal levels of the ubiquitous Ca2+ sensor calmodulin/cmd-1, probably by direct binding to the cmd-1 promoter, thereby regulating Ca2+ signaling, physiology, and behavior (PubMed:34499028).</text>
</comment>
<comment type="subunit">
    <text evidence="7">May interact with calmodulin.</text>
</comment>
<comment type="subcellular location">
    <subcellularLocation>
        <location evidence="8">Nucleus</location>
    </subcellularLocation>
</comment>
<comment type="alternative products">
    <event type="alternative splicing"/>
    <isoform>
        <id>H2KY84-1</id>
        <name evidence="10">a</name>
        <sequence type="displayed"/>
    </isoform>
    <isoform>
        <id>H2KY84-2</id>
        <name evidence="11">b</name>
        <sequence type="described" ref="VSP_061379 VSP_061380"/>
    </isoform>
    <isoform>
        <id>H2KY84-3</id>
        <name evidence="12">c</name>
        <sequence type="described" ref="VSP_061378 VSP_061379 VSP_061380"/>
    </isoform>
</comment>
<comment type="tissue specificity">
    <text evidence="6">Expressed broadly in the nervous system.</text>
</comment>
<comment type="domain">
    <text evidence="6">May negatively modulate calmodulin/cmd-1 expression via a negative feedback loop in which the IQ domains bind to calmodulin.</text>
</comment>
<comment type="similarity">
    <text evidence="7">Belongs to the CAMTA family.</text>
</comment>
<proteinExistence type="evidence at protein level"/>
<evidence type="ECO:0000250" key="1">
    <source>
        <dbReference type="UniProtKB" id="Q9Y6Y1"/>
    </source>
</evidence>
<evidence type="ECO:0000255" key="2"/>
<evidence type="ECO:0000255" key="3">
    <source>
        <dbReference type="PROSITE-ProRule" id="PRU00116"/>
    </source>
</evidence>
<evidence type="ECO:0000255" key="4">
    <source>
        <dbReference type="PROSITE-ProRule" id="PRU00767"/>
    </source>
</evidence>
<evidence type="ECO:0000256" key="5">
    <source>
        <dbReference type="SAM" id="MobiDB-lite"/>
    </source>
</evidence>
<evidence type="ECO:0000269" key="6">
    <source>
    </source>
</evidence>
<evidence type="ECO:0000305" key="7"/>
<evidence type="ECO:0000305" key="8">
    <source>
    </source>
</evidence>
<evidence type="ECO:0000312" key="9">
    <source>
        <dbReference type="Proteomes" id="UP000001940"/>
    </source>
</evidence>
<evidence type="ECO:0000312" key="10">
    <source>
        <dbReference type="WormBase" id="T05C1.4a"/>
    </source>
</evidence>
<evidence type="ECO:0000312" key="11">
    <source>
        <dbReference type="WormBase" id="T05C1.4b"/>
    </source>
</evidence>
<evidence type="ECO:0000312" key="12">
    <source>
        <dbReference type="WormBase" id="T05C1.4c"/>
    </source>
</evidence>
<organism evidence="9">
    <name type="scientific">Caenorhabditis elegans</name>
    <dbReference type="NCBI Taxonomy" id="6239"/>
    <lineage>
        <taxon>Eukaryota</taxon>
        <taxon>Metazoa</taxon>
        <taxon>Ecdysozoa</taxon>
        <taxon>Nematoda</taxon>
        <taxon>Chromadorea</taxon>
        <taxon>Rhabditida</taxon>
        <taxon>Rhabditina</taxon>
        <taxon>Rhabditomorpha</taxon>
        <taxon>Rhabditoidea</taxon>
        <taxon>Rhabditidae</taxon>
        <taxon>Peloderinae</taxon>
        <taxon>Caenorhabditis</taxon>
    </lineage>
</organism>
<protein>
    <recommendedName>
        <fullName evidence="7">Calmodulin-binding transcription activator homolog 1</fullName>
    </recommendedName>
</protein>
<sequence length="1185" mass="133586">MNNSVTRLLFKRLLTLQLCHHFDIIPHRDQSFDCVQMQQPQNETANNFIPSIQLLWSTDPPQIRPDGTYPQAVELFPCFKDKWNTKEEILNIILAANADPKSNCVTVQSSPRPCSSSQFIYPRLDNAWYKNDGYIWKKRTNGKQNREDHLNLKISGHPHISAKYIHSAIVPTFHRRSYSVPDSDCHVLVHYLNVKTNNKIDDQAEEIARSMIENKVFISLSQLHDQLSPIFLQTLNVNQLVAEINEHLKKKGVNLPTSPLPQEPSSSTSRELERRNSCSSAFRKGLSSVALRRQPSANSEIDANHIGTMLKRFGCNGSSSDRISIIQPTMQNFQSIRSHQNHVAMESRSPSGDGDSRPITFEEDASYQQLSIKSSTNVSTPASAFAEKMKIRSGSQESPMGPPSSSSVTSTSLIPIIEMTPSSSSLKGGQKMLVVGGYYRKGHEYKISFGRGRMMPAVLIHAGVLSCVIPPSAKPEVVQIRVFCNGQAISTASEFTYEPQSAHLIKENDDTLVQIFEKIRIMACAFNAYSSIENIQSSSCMESLLANIVQQIDNEVSSQNLNYKTELLNGSAHFPSKTVLHLVASLDYDRLFEALIDLSRKVPACREFDIFARDNDGSTPLHTACKNSASRIARLIISIDSSAIDVVDDRGRTPVEVAPEHSIDMLSDKNNEEERVNATELWVMTNGKAFTTDKILDGKISRAPIAEKPDDLLREATSSYSIMSEMYEGPMLQAGTSRECDEDCESCCDPDSTQQLHVEIAMDTDVHVPDSPKMARLFHAVTSPGIVVPPNARARMADLARQIIEALPDRIKRNSEVSMCPDEEDPGQNHHGGVEPMFYQQASCSMSTDSPNMMDDYFDMMATETRNDIFTEPRSTETTETSASKSAQLFATHCNFFDDRSFASSSTRANTFESDTLDFDKDLGEFFTIHVDRFVDPIQQRLANLKYNDDEQRDVYEAAMVIQRAYRVYRARSTTRRQEDIERRAALKIQGCYRRYKQFCYFKKLHNAAIVVQKHFRMRKRDDKEEGAVEAVIASVPEHPTLDGQSICIQVPKTNSTMLRERAATTIQVAYRYRHRKRQAAARKIQNFMRQNRNNVNIDDGHTQHLIAENACAKRRRYVACPQTSGDQRNKRDSDGERKRDAHHDAPEFIPIGATPSSTTIPHRPTQRHHPWDQLKPPYGCGTLA</sequence>
<accession>H2KY84</accession>
<accession>H2KY85</accession>
<accession>Q629J3</accession>
<gene>
    <name evidence="10" type="primary">camt-1</name>
    <name evidence="10" type="ORF">T05C1.4</name>
</gene>